<accession>P0DKS4</accession>
<name>FP_TAKOB</name>
<sequence length="8" mass="837">YGGTPPFV</sequence>
<proteinExistence type="evidence at protein level"/>
<organism>
    <name type="scientific">Takifugu obscurus</name>
    <name type="common">Obscure pufferfish</name>
    <name type="synonym">Sphoeroides ocellatus obscurus</name>
    <dbReference type="NCBI Taxonomy" id="309541"/>
    <lineage>
        <taxon>Eukaryota</taxon>
        <taxon>Metazoa</taxon>
        <taxon>Chordata</taxon>
        <taxon>Craniata</taxon>
        <taxon>Vertebrata</taxon>
        <taxon>Euteleostomi</taxon>
        <taxon>Actinopterygii</taxon>
        <taxon>Neopterygii</taxon>
        <taxon>Teleostei</taxon>
        <taxon>Neoteleostei</taxon>
        <taxon>Acanthomorphata</taxon>
        <taxon>Eupercaria</taxon>
        <taxon>Tetraodontiformes</taxon>
        <taxon>Tetradontoidea</taxon>
        <taxon>Tetraodontidae</taxon>
        <taxon>Takifugu</taxon>
    </lineage>
</organism>
<reference key="1">
    <citation type="journal article" date="2012" name="Food Chem.">
        <title>Isolation and identification of flavour peptides from Puffer fish (Takifugu obscurus) muscle using an electronic tongue and MALDI-TOF/TOF MS/MS.</title>
        <authorList>
            <person name="Zhang M.X."/>
            <person name="Wang X.C."/>
            <person name="Liu Y."/>
            <person name="Xu X.L."/>
            <person name="Zhou G.H."/>
        </authorList>
    </citation>
    <scope>PROTEIN SEQUENCE</scope>
    <scope>MASS SPECTROMETRY</scope>
    <source>
        <tissue>Muscle</tissue>
    </source>
</reference>
<protein>
    <recommendedName>
        <fullName>Flavor peptide</fullName>
        <shortName>PFFP</shortName>
    </recommendedName>
</protein>
<comment type="mass spectrometry" mass="836.4" method="MALDI" evidence="1"/>
<comment type="miscellaneous">
    <text evidence="2">Contributes to umami taste and sweetness of the cooked fish.</text>
</comment>
<evidence type="ECO:0000269" key="1">
    <source>
    </source>
</evidence>
<evidence type="ECO:0000305" key="2">
    <source>
    </source>
</evidence>
<keyword id="KW-0903">Direct protein sequencing</keyword>
<feature type="peptide" id="PRO_0000420624" description="Flavor peptide">
    <location>
        <begin position="1"/>
        <end position="8"/>
    </location>
</feature>